<reference key="1">
    <citation type="journal article" date="2010" name="J. Bacteriol.">
        <title>Genome sequence of the Fleming strain of Micrococcus luteus, a simple free-living actinobacterium.</title>
        <authorList>
            <person name="Young M."/>
            <person name="Artsatbanov V."/>
            <person name="Beller H.R."/>
            <person name="Chandra G."/>
            <person name="Chater K.F."/>
            <person name="Dover L.G."/>
            <person name="Goh E.B."/>
            <person name="Kahan T."/>
            <person name="Kaprelyants A.S."/>
            <person name="Kyrpides N."/>
            <person name="Lapidus A."/>
            <person name="Lowry S.R."/>
            <person name="Lykidis A."/>
            <person name="Mahillon J."/>
            <person name="Markowitz V."/>
            <person name="Mavromatis K."/>
            <person name="Mukamolova G.V."/>
            <person name="Oren A."/>
            <person name="Rokem J.S."/>
            <person name="Smith M.C."/>
            <person name="Young D.I."/>
            <person name="Greenblatt C.L."/>
        </authorList>
    </citation>
    <scope>NUCLEOTIDE SEQUENCE [LARGE SCALE GENOMIC DNA]</scope>
    <source>
        <strain>ATCC 4698 / DSM 20030 / JCM 1464 / CCM 169 / CCUG 5858 / IAM 1056 / NBRC 3333 / NCIMB 9278 / NCTC 2665 / VKM Ac-2230</strain>
    </source>
</reference>
<evidence type="ECO:0000255" key="1">
    <source>
        <dbReference type="HAMAP-Rule" id="MF_01322"/>
    </source>
</evidence>
<dbReference type="EC" id="2.7.7.6" evidence="1"/>
<dbReference type="EMBL" id="CP001628">
    <property type="protein sequence ID" value="ACS31211.1"/>
    <property type="molecule type" value="Genomic_DNA"/>
</dbReference>
<dbReference type="RefSeq" id="WP_010080378.1">
    <property type="nucleotide sequence ID" value="NC_012803.1"/>
</dbReference>
<dbReference type="SMR" id="C5CC70"/>
<dbReference type="STRING" id="465515.Mlut_17240"/>
<dbReference type="EnsemblBacteria" id="ACS31211">
    <property type="protein sequence ID" value="ACS31211"/>
    <property type="gene ID" value="Mlut_17240"/>
</dbReference>
<dbReference type="GeneID" id="93343590"/>
<dbReference type="KEGG" id="mlu:Mlut_17240"/>
<dbReference type="PATRIC" id="fig|465515.4.peg.1663"/>
<dbReference type="eggNOG" id="COG0086">
    <property type="taxonomic scope" value="Bacteria"/>
</dbReference>
<dbReference type="HOGENOM" id="CLU_000524_3_1_11"/>
<dbReference type="Proteomes" id="UP000000738">
    <property type="component" value="Chromosome"/>
</dbReference>
<dbReference type="GO" id="GO:0000428">
    <property type="term" value="C:DNA-directed RNA polymerase complex"/>
    <property type="evidence" value="ECO:0007669"/>
    <property type="project" value="UniProtKB-KW"/>
</dbReference>
<dbReference type="GO" id="GO:0003677">
    <property type="term" value="F:DNA binding"/>
    <property type="evidence" value="ECO:0007669"/>
    <property type="project" value="UniProtKB-UniRule"/>
</dbReference>
<dbReference type="GO" id="GO:0003899">
    <property type="term" value="F:DNA-directed RNA polymerase activity"/>
    <property type="evidence" value="ECO:0007669"/>
    <property type="project" value="UniProtKB-UniRule"/>
</dbReference>
<dbReference type="GO" id="GO:0000287">
    <property type="term" value="F:magnesium ion binding"/>
    <property type="evidence" value="ECO:0007669"/>
    <property type="project" value="UniProtKB-UniRule"/>
</dbReference>
<dbReference type="GO" id="GO:0008270">
    <property type="term" value="F:zinc ion binding"/>
    <property type="evidence" value="ECO:0007669"/>
    <property type="project" value="UniProtKB-UniRule"/>
</dbReference>
<dbReference type="GO" id="GO:0006351">
    <property type="term" value="P:DNA-templated transcription"/>
    <property type="evidence" value="ECO:0007669"/>
    <property type="project" value="UniProtKB-UniRule"/>
</dbReference>
<dbReference type="CDD" id="cd02655">
    <property type="entry name" value="RNAP_beta'_C"/>
    <property type="match status" value="1"/>
</dbReference>
<dbReference type="CDD" id="cd01609">
    <property type="entry name" value="RNAP_beta'_N"/>
    <property type="match status" value="1"/>
</dbReference>
<dbReference type="FunFam" id="1.10.150.390:FF:000002">
    <property type="entry name" value="DNA-directed RNA polymerase subunit beta"/>
    <property type="match status" value="1"/>
</dbReference>
<dbReference type="FunFam" id="1.10.40.90:FF:000001">
    <property type="entry name" value="DNA-directed RNA polymerase subunit beta"/>
    <property type="match status" value="1"/>
</dbReference>
<dbReference type="FunFam" id="4.10.860.120:FF:000001">
    <property type="entry name" value="DNA-directed RNA polymerase subunit beta"/>
    <property type="match status" value="1"/>
</dbReference>
<dbReference type="Gene3D" id="1.10.132.30">
    <property type="match status" value="1"/>
</dbReference>
<dbReference type="Gene3D" id="1.10.150.390">
    <property type="match status" value="1"/>
</dbReference>
<dbReference type="Gene3D" id="1.10.1790.20">
    <property type="match status" value="1"/>
</dbReference>
<dbReference type="Gene3D" id="1.10.40.90">
    <property type="match status" value="1"/>
</dbReference>
<dbReference type="Gene3D" id="2.40.40.20">
    <property type="match status" value="1"/>
</dbReference>
<dbReference type="Gene3D" id="2.40.50.100">
    <property type="match status" value="1"/>
</dbReference>
<dbReference type="Gene3D" id="4.10.860.120">
    <property type="entry name" value="RNA polymerase II, clamp domain"/>
    <property type="match status" value="1"/>
</dbReference>
<dbReference type="Gene3D" id="1.10.274.100">
    <property type="entry name" value="RNA polymerase Rpb1, domain 3"/>
    <property type="match status" value="1"/>
</dbReference>
<dbReference type="HAMAP" id="MF_01322">
    <property type="entry name" value="RNApol_bact_RpoC"/>
    <property type="match status" value="1"/>
</dbReference>
<dbReference type="InterPro" id="IPR045867">
    <property type="entry name" value="DNA-dir_RpoC_beta_prime"/>
</dbReference>
<dbReference type="InterPro" id="IPR012754">
    <property type="entry name" value="DNA-dir_RpoC_beta_prime_bact"/>
</dbReference>
<dbReference type="InterPro" id="IPR000722">
    <property type="entry name" value="RNA_pol_asu"/>
</dbReference>
<dbReference type="InterPro" id="IPR006592">
    <property type="entry name" value="RNA_pol_N"/>
</dbReference>
<dbReference type="InterPro" id="IPR007080">
    <property type="entry name" value="RNA_pol_Rpb1_1"/>
</dbReference>
<dbReference type="InterPro" id="IPR007066">
    <property type="entry name" value="RNA_pol_Rpb1_3"/>
</dbReference>
<dbReference type="InterPro" id="IPR042102">
    <property type="entry name" value="RNA_pol_Rpb1_3_sf"/>
</dbReference>
<dbReference type="InterPro" id="IPR007083">
    <property type="entry name" value="RNA_pol_Rpb1_4"/>
</dbReference>
<dbReference type="InterPro" id="IPR007081">
    <property type="entry name" value="RNA_pol_Rpb1_5"/>
</dbReference>
<dbReference type="InterPro" id="IPR044893">
    <property type="entry name" value="RNA_pol_Rpb1_clamp_domain"/>
</dbReference>
<dbReference type="InterPro" id="IPR038120">
    <property type="entry name" value="Rpb1_funnel_sf"/>
</dbReference>
<dbReference type="NCBIfam" id="NF011498">
    <property type="entry name" value="PRK14906.1"/>
    <property type="match status" value="1"/>
</dbReference>
<dbReference type="NCBIfam" id="TIGR02386">
    <property type="entry name" value="rpoC_TIGR"/>
    <property type="match status" value="1"/>
</dbReference>
<dbReference type="PANTHER" id="PTHR19376">
    <property type="entry name" value="DNA-DIRECTED RNA POLYMERASE"/>
    <property type="match status" value="1"/>
</dbReference>
<dbReference type="PANTHER" id="PTHR19376:SF54">
    <property type="entry name" value="DNA-DIRECTED RNA POLYMERASE SUBUNIT BETA"/>
    <property type="match status" value="1"/>
</dbReference>
<dbReference type="Pfam" id="PF04997">
    <property type="entry name" value="RNA_pol_Rpb1_1"/>
    <property type="match status" value="1"/>
</dbReference>
<dbReference type="Pfam" id="PF00623">
    <property type="entry name" value="RNA_pol_Rpb1_2"/>
    <property type="match status" value="2"/>
</dbReference>
<dbReference type="Pfam" id="PF04983">
    <property type="entry name" value="RNA_pol_Rpb1_3"/>
    <property type="match status" value="1"/>
</dbReference>
<dbReference type="Pfam" id="PF05000">
    <property type="entry name" value="RNA_pol_Rpb1_4"/>
    <property type="match status" value="1"/>
</dbReference>
<dbReference type="Pfam" id="PF04998">
    <property type="entry name" value="RNA_pol_Rpb1_5"/>
    <property type="match status" value="1"/>
</dbReference>
<dbReference type="SMART" id="SM00663">
    <property type="entry name" value="RPOLA_N"/>
    <property type="match status" value="1"/>
</dbReference>
<dbReference type="SUPFAM" id="SSF64484">
    <property type="entry name" value="beta and beta-prime subunits of DNA dependent RNA-polymerase"/>
    <property type="match status" value="1"/>
</dbReference>
<comment type="function">
    <text evidence="1">DNA-dependent RNA polymerase catalyzes the transcription of DNA into RNA using the four ribonucleoside triphosphates as substrates.</text>
</comment>
<comment type="catalytic activity">
    <reaction evidence="1">
        <text>RNA(n) + a ribonucleoside 5'-triphosphate = RNA(n+1) + diphosphate</text>
        <dbReference type="Rhea" id="RHEA:21248"/>
        <dbReference type="Rhea" id="RHEA-COMP:14527"/>
        <dbReference type="Rhea" id="RHEA-COMP:17342"/>
        <dbReference type="ChEBI" id="CHEBI:33019"/>
        <dbReference type="ChEBI" id="CHEBI:61557"/>
        <dbReference type="ChEBI" id="CHEBI:140395"/>
        <dbReference type="EC" id="2.7.7.6"/>
    </reaction>
</comment>
<comment type="cofactor">
    <cofactor evidence="1">
        <name>Mg(2+)</name>
        <dbReference type="ChEBI" id="CHEBI:18420"/>
    </cofactor>
    <text evidence="1">Binds 1 Mg(2+) ion per subunit.</text>
</comment>
<comment type="cofactor">
    <cofactor evidence="1">
        <name>Zn(2+)</name>
        <dbReference type="ChEBI" id="CHEBI:29105"/>
    </cofactor>
    <text evidence="1">Binds 2 Zn(2+) ions per subunit.</text>
</comment>
<comment type="subunit">
    <text evidence="1">The RNAP catalytic core consists of 2 alpha, 1 beta, 1 beta' and 1 omega subunit. When a sigma factor is associated with the core the holoenzyme is formed, which can initiate transcription.</text>
</comment>
<comment type="similarity">
    <text evidence="1">Belongs to the RNA polymerase beta' chain family.</text>
</comment>
<name>RPOC_MICLC</name>
<organism>
    <name type="scientific">Micrococcus luteus (strain ATCC 4698 / DSM 20030 / JCM 1464 / CCM 169 / CCUG 5858 / IAM 1056 / NBRC 3333 / NCIMB 9278 / NCTC 2665 / VKM Ac-2230)</name>
    <name type="common">Micrococcus lysodeikticus</name>
    <dbReference type="NCBI Taxonomy" id="465515"/>
    <lineage>
        <taxon>Bacteria</taxon>
        <taxon>Bacillati</taxon>
        <taxon>Actinomycetota</taxon>
        <taxon>Actinomycetes</taxon>
        <taxon>Micrococcales</taxon>
        <taxon>Micrococcaceae</taxon>
        <taxon>Micrococcus</taxon>
    </lineage>
</organism>
<keyword id="KW-0240">DNA-directed RNA polymerase</keyword>
<keyword id="KW-0460">Magnesium</keyword>
<keyword id="KW-0479">Metal-binding</keyword>
<keyword id="KW-0548">Nucleotidyltransferase</keyword>
<keyword id="KW-1185">Reference proteome</keyword>
<keyword id="KW-0804">Transcription</keyword>
<keyword id="KW-0808">Transferase</keyword>
<keyword id="KW-0862">Zinc</keyword>
<proteinExistence type="inferred from homology"/>
<sequence length="1298" mass="142417">MSTDNSFGLMRIGLATAEDIRRWSYGEVKKPETINYRTLKPEKDGLFCEKIFGPTRDWECACGKYKRVRFKGIICERCGVEVTRSKVRRDRMGHIELAAPVTHIWYFKGVPSRLGYLLDLAPKDLEKVIYFAAYMITSVDEEARHRDLANLQAEYDQETRVLADQRDSDIAAVAADLEKDLAKLESEGAKAAEKKKARDAADKTMAQIRKRADAELDRKEQVWDRFKNLKVADLEGDEGLYRAMRDKYGQYFEGSMGAEAIQRRLQTFDLEAESEMLRETIKTGKGQRKTRALKRLKVVNAFLTTDNSPEGMVLDAVPVIPPELRPMVQLDGGRFATSDLNDLYRRVINRNNRLKRLLDLGAPEIIVNNEKRMLQEAVDSLFDNGRRGRPVTGPGNRPLKSLSDMLKGKQGRFRQNLLGKRVDYSGRSVIVVGPQLKLHQCGLPKQMALELFKPFVMKRLVDLNHAQNIKSAKRMVERFRPQVWDVLEEVITEHPVLLNRAPTLHRLGIQAFEPQLVEGKALQLHPLVCSAFNADFDGDQMAVHLPLSPEAQAEARLLMLSSHNILKPSDGRAVAVPAQDMIIGLNHLTTVRPDEVGAGNLYATVGEAIMAFDGGDLHLNAPARIGVEGFVPSAAVPAPEGWSEGEIALIETTLGKVLFNELLPDDYPWLDKQATKGTLGQLVNDLAERYPMVVTAQTLDNLKDAGFHWGTWSGVTVAISDITSDFDKAAIMEGYEEQAQRVQQQYDKGLIADDERRSELIDIWNKATDEVAAAMKDGLPELNTINRMVSSGARGNWLQVRQIAGIRGLVANPKGEIIPRPIKSSYREGLSVLEYFSATHGARKGLADTALKTANSGYLTRRLVDVSQDVIVREDDCGTERGLSVTIAAPNADGELVAHEQVENSAFARTLAQDVTGEDGTVLAAAGADVGDVLIGELVAAGVTEIKVRSVLTCESAVGTCAKCYGRSMATGQLADIGEAVGIIAAQSIGEPGTQLTMRTFHTGGVASADDITQGLPRIQELFEARTPKGVAPISEVAGRVTIEDTETSVRLLLTPDDGSEEIAYPVLRRARILVADGEHVPVGTQLVAGAVDPKQVLRVLGPRAAQRFLVDEVQNVYQSQGVGIHDKHVEVIVRQMLRRITVIESGDTDLLPGELTDRARFVAANRAAVAEGRQPASGRDELMGITKASLATDSWLSAASFQETTRVLTQAAMEGKSDPLLGLKENVIIGKLIPAGTGLDRYTKTVVEPTEEAKANLFASPAGFADFDYPGLDQSLGENDFHAVSLDDYDRGGDFRA</sequence>
<accession>C5CC70</accession>
<gene>
    <name evidence="1" type="primary">rpoC</name>
    <name type="ordered locus">Mlut_17240</name>
</gene>
<protein>
    <recommendedName>
        <fullName evidence="1">DNA-directed RNA polymerase subunit beta'</fullName>
        <shortName evidence="1">RNAP subunit beta'</shortName>
        <ecNumber evidence="1">2.7.7.6</ecNumber>
    </recommendedName>
    <alternativeName>
        <fullName evidence="1">RNA polymerase subunit beta'</fullName>
    </alternativeName>
    <alternativeName>
        <fullName evidence="1">Transcriptase subunit beta'</fullName>
    </alternativeName>
</protein>
<feature type="chain" id="PRO_1000214495" description="DNA-directed RNA polymerase subunit beta'">
    <location>
        <begin position="1"/>
        <end position="1298"/>
    </location>
</feature>
<feature type="binding site" evidence="1">
    <location>
        <position position="60"/>
    </location>
    <ligand>
        <name>Zn(2+)</name>
        <dbReference type="ChEBI" id="CHEBI:29105"/>
        <label>1</label>
    </ligand>
</feature>
<feature type="binding site" evidence="1">
    <location>
        <position position="62"/>
    </location>
    <ligand>
        <name>Zn(2+)</name>
        <dbReference type="ChEBI" id="CHEBI:29105"/>
        <label>1</label>
    </ligand>
</feature>
<feature type="binding site" evidence="1">
    <location>
        <position position="75"/>
    </location>
    <ligand>
        <name>Zn(2+)</name>
        <dbReference type="ChEBI" id="CHEBI:29105"/>
        <label>1</label>
    </ligand>
</feature>
<feature type="binding site" evidence="1">
    <location>
        <position position="78"/>
    </location>
    <ligand>
        <name>Zn(2+)</name>
        <dbReference type="ChEBI" id="CHEBI:29105"/>
        <label>1</label>
    </ligand>
</feature>
<feature type="binding site" evidence="1">
    <location>
        <position position="535"/>
    </location>
    <ligand>
        <name>Mg(2+)</name>
        <dbReference type="ChEBI" id="CHEBI:18420"/>
    </ligand>
</feature>
<feature type="binding site" evidence="1">
    <location>
        <position position="537"/>
    </location>
    <ligand>
        <name>Mg(2+)</name>
        <dbReference type="ChEBI" id="CHEBI:18420"/>
    </ligand>
</feature>
<feature type="binding site" evidence="1">
    <location>
        <position position="539"/>
    </location>
    <ligand>
        <name>Mg(2+)</name>
        <dbReference type="ChEBI" id="CHEBI:18420"/>
    </ligand>
</feature>
<feature type="binding site" evidence="1">
    <location>
        <position position="877"/>
    </location>
    <ligand>
        <name>Zn(2+)</name>
        <dbReference type="ChEBI" id="CHEBI:29105"/>
        <label>2</label>
    </ligand>
</feature>
<feature type="binding site" evidence="1">
    <location>
        <position position="954"/>
    </location>
    <ligand>
        <name>Zn(2+)</name>
        <dbReference type="ChEBI" id="CHEBI:29105"/>
        <label>2</label>
    </ligand>
</feature>
<feature type="binding site" evidence="1">
    <location>
        <position position="961"/>
    </location>
    <ligand>
        <name>Zn(2+)</name>
        <dbReference type="ChEBI" id="CHEBI:29105"/>
        <label>2</label>
    </ligand>
</feature>
<feature type="binding site" evidence="1">
    <location>
        <position position="964"/>
    </location>
    <ligand>
        <name>Zn(2+)</name>
        <dbReference type="ChEBI" id="CHEBI:29105"/>
        <label>2</label>
    </ligand>
</feature>